<proteinExistence type="inferred from homology"/>
<reference key="1">
    <citation type="journal article" date="2001" name="Nature">
        <title>Genome sequence of enterohaemorrhagic Escherichia coli O157:H7.</title>
        <authorList>
            <person name="Perna N.T."/>
            <person name="Plunkett G. III"/>
            <person name="Burland V."/>
            <person name="Mau B."/>
            <person name="Glasner J.D."/>
            <person name="Rose D.J."/>
            <person name="Mayhew G.F."/>
            <person name="Evans P.S."/>
            <person name="Gregor J."/>
            <person name="Kirkpatrick H.A."/>
            <person name="Posfai G."/>
            <person name="Hackett J."/>
            <person name="Klink S."/>
            <person name="Boutin A."/>
            <person name="Shao Y."/>
            <person name="Miller L."/>
            <person name="Grotbeck E.J."/>
            <person name="Davis N.W."/>
            <person name="Lim A."/>
            <person name="Dimalanta E.T."/>
            <person name="Potamousis K."/>
            <person name="Apodaca J."/>
            <person name="Anantharaman T.S."/>
            <person name="Lin J."/>
            <person name="Yen G."/>
            <person name="Schwartz D.C."/>
            <person name="Welch R.A."/>
            <person name="Blattner F.R."/>
        </authorList>
    </citation>
    <scope>NUCLEOTIDE SEQUENCE [LARGE SCALE GENOMIC DNA]</scope>
    <source>
        <strain>O157:H7 / EDL933 / ATCC 700927 / EHEC</strain>
    </source>
</reference>
<reference key="2">
    <citation type="journal article" date="2001" name="DNA Res.">
        <title>Complete genome sequence of enterohemorrhagic Escherichia coli O157:H7 and genomic comparison with a laboratory strain K-12.</title>
        <authorList>
            <person name="Hayashi T."/>
            <person name="Makino K."/>
            <person name="Ohnishi M."/>
            <person name="Kurokawa K."/>
            <person name="Ishii K."/>
            <person name="Yokoyama K."/>
            <person name="Han C.-G."/>
            <person name="Ohtsubo E."/>
            <person name="Nakayama K."/>
            <person name="Murata T."/>
            <person name="Tanaka M."/>
            <person name="Tobe T."/>
            <person name="Iida T."/>
            <person name="Takami H."/>
            <person name="Honda T."/>
            <person name="Sasakawa C."/>
            <person name="Ogasawara N."/>
            <person name="Yasunaga T."/>
            <person name="Kuhara S."/>
            <person name="Shiba T."/>
            <person name="Hattori M."/>
            <person name="Shinagawa H."/>
        </authorList>
    </citation>
    <scope>NUCLEOTIDE SEQUENCE [LARGE SCALE GENOMIC DNA]</scope>
    <source>
        <strain>O157:H7 / Sakai / RIMD 0509952 / EHEC</strain>
    </source>
</reference>
<dbReference type="EC" id="4.2.1.59" evidence="2"/>
<dbReference type="EC" id="5.3.3.14" evidence="2"/>
<dbReference type="EMBL" id="AE005174">
    <property type="protein sequence ID" value="AAG55440.1"/>
    <property type="molecule type" value="Genomic_DNA"/>
</dbReference>
<dbReference type="EMBL" id="BA000007">
    <property type="protein sequence ID" value="BAB34461.2"/>
    <property type="status" value="ALT_INIT"/>
    <property type="molecule type" value="Genomic_DNA"/>
</dbReference>
<dbReference type="PIR" id="D85622">
    <property type="entry name" value="D85622"/>
</dbReference>
<dbReference type="PIR" id="F90758">
    <property type="entry name" value="F90758"/>
</dbReference>
<dbReference type="RefSeq" id="NP_309065.1">
    <property type="nucleotide sequence ID" value="NC_002695.1"/>
</dbReference>
<dbReference type="RefSeq" id="WP_000227927.1">
    <property type="nucleotide sequence ID" value="NZ_VOAI01000006.1"/>
</dbReference>
<dbReference type="SMR" id="P0A6Q4"/>
<dbReference type="STRING" id="155864.Z1304"/>
<dbReference type="GeneID" id="917125"/>
<dbReference type="GeneID" id="93776460"/>
<dbReference type="KEGG" id="ece:Z1304"/>
<dbReference type="KEGG" id="ecs:ECs_1038"/>
<dbReference type="PATRIC" id="fig|386585.9.peg.1162"/>
<dbReference type="eggNOG" id="COG0764">
    <property type="taxonomic scope" value="Bacteria"/>
</dbReference>
<dbReference type="HOGENOM" id="CLU_097925_0_0_6"/>
<dbReference type="OMA" id="FDCHFKG"/>
<dbReference type="UniPathway" id="UPA00094"/>
<dbReference type="Proteomes" id="UP000000558">
    <property type="component" value="Chromosome"/>
</dbReference>
<dbReference type="Proteomes" id="UP000002519">
    <property type="component" value="Chromosome"/>
</dbReference>
<dbReference type="GO" id="GO:0005737">
    <property type="term" value="C:cytoplasm"/>
    <property type="evidence" value="ECO:0007669"/>
    <property type="project" value="UniProtKB-SubCell"/>
</dbReference>
<dbReference type="GO" id="GO:0019171">
    <property type="term" value="F:(3R)-hydroxyacyl-[acyl-carrier-protein] dehydratase activity"/>
    <property type="evidence" value="ECO:0007669"/>
    <property type="project" value="UniProtKB-UniRule"/>
</dbReference>
<dbReference type="GO" id="GO:0034017">
    <property type="term" value="F:trans-2-decenoyl-acyl-carrier-protein isomerase activity"/>
    <property type="evidence" value="ECO:0007669"/>
    <property type="project" value="UniProtKB-UniRule"/>
</dbReference>
<dbReference type="GO" id="GO:0006636">
    <property type="term" value="P:unsaturated fatty acid biosynthetic process"/>
    <property type="evidence" value="ECO:0007669"/>
    <property type="project" value="UniProtKB-UniRule"/>
</dbReference>
<dbReference type="CDD" id="cd01287">
    <property type="entry name" value="FabA"/>
    <property type="match status" value="1"/>
</dbReference>
<dbReference type="FunFam" id="3.10.129.10:FF:000003">
    <property type="entry name" value="3-hydroxydecanoyl-[acyl-carrier-protein] dehydratase"/>
    <property type="match status" value="1"/>
</dbReference>
<dbReference type="Gene3D" id="3.10.129.10">
    <property type="entry name" value="Hotdog Thioesterase"/>
    <property type="match status" value="1"/>
</dbReference>
<dbReference type="HAMAP" id="MF_00405">
    <property type="entry name" value="FabA"/>
    <property type="match status" value="1"/>
</dbReference>
<dbReference type="InterPro" id="IPR010083">
    <property type="entry name" value="FabA"/>
</dbReference>
<dbReference type="InterPro" id="IPR013114">
    <property type="entry name" value="FabA_FabZ"/>
</dbReference>
<dbReference type="InterPro" id="IPR029069">
    <property type="entry name" value="HotDog_dom_sf"/>
</dbReference>
<dbReference type="NCBIfam" id="TIGR01749">
    <property type="entry name" value="fabA"/>
    <property type="match status" value="1"/>
</dbReference>
<dbReference type="NCBIfam" id="NF003509">
    <property type="entry name" value="PRK05174.1"/>
    <property type="match status" value="1"/>
</dbReference>
<dbReference type="PANTHER" id="PTHR30272">
    <property type="entry name" value="3-HYDROXYACYL-[ACYL-CARRIER-PROTEIN] DEHYDRATASE"/>
    <property type="match status" value="1"/>
</dbReference>
<dbReference type="PANTHER" id="PTHR30272:SF8">
    <property type="entry name" value="3-HYDROXYDECANOYL-[ACYL-CARRIER-PROTEIN] DEHYDRATASE"/>
    <property type="match status" value="1"/>
</dbReference>
<dbReference type="Pfam" id="PF07977">
    <property type="entry name" value="FabA"/>
    <property type="match status" value="1"/>
</dbReference>
<dbReference type="SUPFAM" id="SSF54637">
    <property type="entry name" value="Thioesterase/thiol ester dehydrase-isomerase"/>
    <property type="match status" value="1"/>
</dbReference>
<sequence>MVDKRESYTKEDLLASGRGELFGAKGPQLPAPNMLMMDRVVKMTETGGNFDKGYVEAELDINPDLWFFGCHFIGDPVMPGCLGLDAMWQLVGFYLGWLGGEGKGRALGVGEVKFTGQVLPTAKKVTYRIHFKRIVNRRLIMGLADGEVLVDGRLIYTASDLKVGLFQDTSAF</sequence>
<protein>
    <recommendedName>
        <fullName evidence="2">3-hydroxydecanoyl-[acyl-carrier-protein] dehydratase</fullName>
        <ecNumber evidence="2">4.2.1.59</ecNumber>
    </recommendedName>
    <alternativeName>
        <fullName evidence="2">3-hydroxyacyl-[acyl-carrier-protein] dehydratase FabA</fullName>
    </alternativeName>
    <alternativeName>
        <fullName evidence="2">Beta-hydroxydecanoyl thioester dehydrase</fullName>
    </alternativeName>
    <alternativeName>
        <fullName evidence="2">Trans-2-decenoyl-[acyl-carrier-protein] isomerase</fullName>
        <ecNumber evidence="2">5.3.3.14</ecNumber>
    </alternativeName>
</protein>
<accession>P0A6Q4</accession>
<accession>P18391</accession>
<accession>Q59383</accession>
<comment type="function">
    <text evidence="2">Necessary for the introduction of cis unsaturation into fatty acids. Catalyzes the dehydration of (3R)-3-hydroxydecanoyl-ACP to E-(2)-decenoyl-ACP and then its isomerization to Z-(3)-decenoyl-ACP. Can catalyze the dehydratase reaction for beta-hydroxyacyl-ACPs with saturated chain lengths up to 16:0, being most active on intermediate chain length.</text>
</comment>
<comment type="catalytic activity">
    <reaction evidence="2">
        <text>a (3R)-hydroxyacyl-[ACP] = a (2E)-enoyl-[ACP] + H2O</text>
        <dbReference type="Rhea" id="RHEA:13097"/>
        <dbReference type="Rhea" id="RHEA-COMP:9925"/>
        <dbReference type="Rhea" id="RHEA-COMP:9945"/>
        <dbReference type="ChEBI" id="CHEBI:15377"/>
        <dbReference type="ChEBI" id="CHEBI:78784"/>
        <dbReference type="ChEBI" id="CHEBI:78827"/>
        <dbReference type="EC" id="4.2.1.59"/>
    </reaction>
</comment>
<comment type="catalytic activity">
    <reaction evidence="2">
        <text>(3R)-hydroxydecanoyl-[ACP] = (2E)-decenoyl-[ACP] + H2O</text>
        <dbReference type="Rhea" id="RHEA:41860"/>
        <dbReference type="Rhea" id="RHEA-COMP:9638"/>
        <dbReference type="Rhea" id="RHEA-COMP:9639"/>
        <dbReference type="ChEBI" id="CHEBI:15377"/>
        <dbReference type="ChEBI" id="CHEBI:78466"/>
        <dbReference type="ChEBI" id="CHEBI:78467"/>
    </reaction>
</comment>
<comment type="catalytic activity">
    <reaction evidence="2">
        <text>(2E)-decenoyl-[ACP] = (3Z)-decenoyl-[ACP]</text>
        <dbReference type="Rhea" id="RHEA:23568"/>
        <dbReference type="Rhea" id="RHEA-COMP:9639"/>
        <dbReference type="Rhea" id="RHEA-COMP:9927"/>
        <dbReference type="ChEBI" id="CHEBI:78467"/>
        <dbReference type="ChEBI" id="CHEBI:78798"/>
        <dbReference type="EC" id="5.3.3.14"/>
    </reaction>
</comment>
<comment type="pathway">
    <text evidence="2">Lipid metabolism; fatty acid biosynthesis.</text>
</comment>
<comment type="subunit">
    <text evidence="2">Homodimer.</text>
</comment>
<comment type="subcellular location">
    <subcellularLocation>
        <location evidence="2">Cytoplasm</location>
    </subcellularLocation>
</comment>
<comment type="similarity">
    <text evidence="2">Belongs to the thioester dehydratase family. FabA subfamily.</text>
</comment>
<comment type="sequence caution" evidence="3">
    <conflict type="erroneous initiation">
        <sequence resource="EMBL-CDS" id="BAB34461"/>
    </conflict>
    <text>Extended N-terminus.</text>
</comment>
<keyword id="KW-0963">Cytoplasm</keyword>
<keyword id="KW-0275">Fatty acid biosynthesis</keyword>
<keyword id="KW-0276">Fatty acid metabolism</keyword>
<keyword id="KW-0413">Isomerase</keyword>
<keyword id="KW-0444">Lipid biosynthesis</keyword>
<keyword id="KW-0443">Lipid metabolism</keyword>
<keyword id="KW-0456">Lyase</keyword>
<keyword id="KW-1185">Reference proteome</keyword>
<organism>
    <name type="scientific">Escherichia coli O157:H7</name>
    <dbReference type="NCBI Taxonomy" id="83334"/>
    <lineage>
        <taxon>Bacteria</taxon>
        <taxon>Pseudomonadati</taxon>
        <taxon>Pseudomonadota</taxon>
        <taxon>Gammaproteobacteria</taxon>
        <taxon>Enterobacterales</taxon>
        <taxon>Enterobacteriaceae</taxon>
        <taxon>Escherichia</taxon>
    </lineage>
</organism>
<feature type="initiator methionine" description="Removed" evidence="1">
    <location>
        <position position="1"/>
    </location>
</feature>
<feature type="chain" id="PRO_0000091595" description="3-hydroxydecanoyl-[acyl-carrier-protein] dehydratase">
    <location>
        <begin position="2"/>
        <end position="172"/>
    </location>
</feature>
<feature type="active site" evidence="2">
    <location>
        <position position="71"/>
    </location>
</feature>
<gene>
    <name evidence="2" type="primary">fabA</name>
    <name type="ordered locus">Z1304</name>
    <name type="ordered locus">ECs1038</name>
</gene>
<name>FABA_ECO57</name>
<evidence type="ECO:0000250" key="1">
    <source>
        <dbReference type="UniProtKB" id="P0A6Q3"/>
    </source>
</evidence>
<evidence type="ECO:0000255" key="2">
    <source>
        <dbReference type="HAMAP-Rule" id="MF_00405"/>
    </source>
</evidence>
<evidence type="ECO:0000305" key="3"/>